<protein>
    <recommendedName>
        <fullName>Signal recognition particle receptor subunit alpha</fullName>
        <shortName>SR-alpha</shortName>
    </recommendedName>
    <alternativeName>
        <fullName>Docking protein alpha</fullName>
        <shortName>DP-alpha</shortName>
    </alternativeName>
</protein>
<keyword id="KW-0256">Endoplasmic reticulum</keyword>
<keyword id="KW-0342">GTP-binding</keyword>
<keyword id="KW-0472">Membrane</keyword>
<keyword id="KW-0547">Nucleotide-binding</keyword>
<keyword id="KW-0597">Phosphoprotein</keyword>
<keyword id="KW-0675">Receptor</keyword>
<keyword id="KW-1185">Reference proteome</keyword>
<feature type="chain" id="PRO_0000101212" description="Signal recognition particle receptor subunit alpha">
    <location>
        <begin position="1"/>
        <end position="638"/>
    </location>
</feature>
<feature type="region of interest" description="Disordered" evidence="4">
    <location>
        <begin position="129"/>
        <end position="205"/>
    </location>
</feature>
<feature type="region of interest" description="Disordered" evidence="4">
    <location>
        <begin position="218"/>
        <end position="245"/>
    </location>
</feature>
<feature type="region of interest" description="Disordered" evidence="4">
    <location>
        <begin position="262"/>
        <end position="315"/>
    </location>
</feature>
<feature type="region of interest" description="NG domain" evidence="2">
    <location>
        <begin position="419"/>
        <end position="636"/>
    </location>
</feature>
<feature type="compositionally biased region" description="Basic and acidic residues" evidence="4">
    <location>
        <begin position="137"/>
        <end position="146"/>
    </location>
</feature>
<feature type="compositionally biased region" description="Basic and acidic residues" evidence="4">
    <location>
        <begin position="153"/>
        <end position="165"/>
    </location>
</feature>
<feature type="compositionally biased region" description="Basic and acidic residues" evidence="4">
    <location>
        <begin position="218"/>
        <end position="239"/>
    </location>
</feature>
<feature type="compositionally biased region" description="Polar residues" evidence="4">
    <location>
        <begin position="304"/>
        <end position="314"/>
    </location>
</feature>
<feature type="binding site" evidence="1">
    <location>
        <begin position="425"/>
        <end position="432"/>
    </location>
    <ligand>
        <name>GTP</name>
        <dbReference type="ChEBI" id="CHEBI:37565"/>
    </ligand>
</feature>
<feature type="binding site" evidence="1">
    <location>
        <begin position="520"/>
        <end position="524"/>
    </location>
    <ligand>
        <name>GTP</name>
        <dbReference type="ChEBI" id="CHEBI:37565"/>
    </ligand>
</feature>
<feature type="binding site" evidence="1">
    <location>
        <begin position="588"/>
        <end position="591"/>
    </location>
    <ligand>
        <name>GTP</name>
        <dbReference type="ChEBI" id="CHEBI:37565"/>
    </ligand>
</feature>
<feature type="modified residue" description="Phosphoserine" evidence="2">
    <location>
        <position position="177"/>
    </location>
</feature>
<feature type="modified residue" description="Phosphothreonine" evidence="2">
    <location>
        <position position="284"/>
    </location>
</feature>
<feature type="modified residue" description="Phosphoserine" evidence="2">
    <location>
        <position position="296"/>
    </location>
</feature>
<feature type="modified residue" description="Phosphoserine" evidence="2">
    <location>
        <position position="297"/>
    </location>
</feature>
<feature type="modified residue" description="Phosphoserine" evidence="2">
    <location>
        <position position="298"/>
    </location>
</feature>
<feature type="modified residue" description="Phosphoserine" evidence="2">
    <location>
        <position position="473"/>
    </location>
</feature>
<feature type="modified residue" description="Phosphothreonine" evidence="2">
    <location>
        <position position="578"/>
    </location>
</feature>
<gene>
    <name evidence="2" type="primary">SRPRA</name>
    <name type="synonym">SRPR</name>
</gene>
<reference key="1">
    <citation type="journal article" date="1985" name="Nature">
        <title>Topology of signal recognition particle receptor in endoplasmic reticulum membrane.</title>
        <authorList>
            <person name="Lauffer L."/>
            <person name="Garcia P.D."/>
            <person name="Harkins R.N."/>
            <person name="Coussens L."/>
            <person name="Ullrich A."/>
            <person name="Walter P."/>
        </authorList>
    </citation>
    <scope>NUCLEOTIDE SEQUENCE [MRNA]</scope>
</reference>
<organism>
    <name type="scientific">Canis lupus familiaris</name>
    <name type="common">Dog</name>
    <name type="synonym">Canis familiaris</name>
    <dbReference type="NCBI Taxonomy" id="9615"/>
    <lineage>
        <taxon>Eukaryota</taxon>
        <taxon>Metazoa</taxon>
        <taxon>Chordata</taxon>
        <taxon>Craniata</taxon>
        <taxon>Vertebrata</taxon>
        <taxon>Euteleostomi</taxon>
        <taxon>Mammalia</taxon>
        <taxon>Eutheria</taxon>
        <taxon>Laurasiatheria</taxon>
        <taxon>Carnivora</taxon>
        <taxon>Caniformia</taxon>
        <taxon>Canidae</taxon>
        <taxon>Canis</taxon>
    </lineage>
</organism>
<sequence>MLDFFTIFSKGGLVLWCFQGVSDSCTGPVNALIRSVLLQERGGNNSFTHEALTLKYKLDNQFELVFVVGFQKILTLTYVDKLIDDVHRLFRDKYRTEIQQQSALSLLNGTFDFQNDFLRLLREREESSKIRAPTTMKKFEDSEKAKKPVRSMIETRGEKPKEKAKNSKKKGAKKESSDGPLATGKAVPAEKSGLPAGPENGVELSKEELIRRKREEFIQKHGRGLEKSSKSTKSDAPKEKGKKAPRVWALGGCANKEVLDYSAPTTNGAPDAAPPEDINLIRGTGPGGQLQDLDCSSSDDEETAQNASKPSATKGTLGGMFGMLKGLVGSKSLSREDMESVLDKMRDHLIAKNVAADIAVQLCESVANKLEGKVMGTFSTVTSTVKQALQESLVQILQPQRRVDMLRDIMDAQRHQRPYVVTFCGVNGVGKSTNLAKISFWLLENGFSVLIAACDTFRAGAVEHVRTHTRRLSALHPPEKHAGPTMVQLFEKGYGKDAAGIAMEAIAFARNQGFDVVLVDTAGRMQDNAPLMTALAKLITVNTPDLVLFVGEALVGNEAVDQLVKFNRALADHSMAQTPRLIDGIVLTKFDTIDDKVGAAISMTYITSKPIVFVGTGQTYCDLRSLNAKAVVAALMKA</sequence>
<evidence type="ECO:0000250" key="1"/>
<evidence type="ECO:0000250" key="2">
    <source>
        <dbReference type="UniProtKB" id="P08240"/>
    </source>
</evidence>
<evidence type="ECO:0000250" key="3">
    <source>
        <dbReference type="UniProtKB" id="P32916"/>
    </source>
</evidence>
<evidence type="ECO:0000256" key="4">
    <source>
        <dbReference type="SAM" id="MobiDB-lite"/>
    </source>
</evidence>
<evidence type="ECO:0000305" key="5"/>
<comment type="function">
    <text evidence="2">Component of the SRP (signal recognition particle) receptor (By similarity). Ensures, in conjunction with the signal recognition particle, the correct targeting of the nascent secretory proteins to the endoplasmic reticulum membrane system (By similarity). Forms a guanosine 5'-triphosphate (GTP)-dependent complex with the SRP subunit SRP54 (By similarity). SRP receptor compaction and GTPase rearrangement drive SRP-mediated cotranslational protein translocation into the ER (By similarity).</text>
</comment>
<comment type="subunit">
    <text evidence="2">Heterodimer with SRPRB (By similarity). Interacts with the signal recognition particle (SRP) complex subunit SRP54 (By similarity).</text>
</comment>
<comment type="subcellular location">
    <subcellularLocation>
        <location evidence="3">Endoplasmic reticulum membrane</location>
        <topology evidence="3">Peripheral membrane protein</topology>
        <orientation evidence="3">Cytoplasmic side</orientation>
    </subcellularLocation>
    <text evidence="3">Thought to be anchored in the membrane through an interaction with SR-beta, which contains a bona fide transmembrane domain.</text>
</comment>
<comment type="domain">
    <text evidence="2">The NG domain, also named G domain, is a special guanosine triphosphatase (GTPase) domain, which forms a guanosine 5'-triphosphate (GTP)-dependent complex with a homologous NG domain in the signal recognition particle (SRP) complex subunit SRP54 (By similarity). The two NG domains undergo cooperative rearrangements upon their assembly, which culminate in the reciprocal activation of the GTPase activity of one another (By similarity). GTPase induced rearrangement of SR drives SRP-mediated cotranslational protein translocation into the ER (By similarity).</text>
</comment>
<comment type="similarity">
    <text evidence="5">Belongs to the GTP-binding SRP family.</text>
</comment>
<accession>P06625</accession>
<proteinExistence type="evidence at transcript level"/>
<name>SRPRA_CANLF</name>
<dbReference type="EMBL" id="X03184">
    <property type="protein sequence ID" value="CAA26945.1"/>
    <property type="molecule type" value="mRNA"/>
</dbReference>
<dbReference type="PIR" id="A24570">
    <property type="entry name" value="A24570"/>
</dbReference>
<dbReference type="SMR" id="P06625"/>
<dbReference type="FunCoup" id="P06625">
    <property type="interactions" value="2513"/>
</dbReference>
<dbReference type="STRING" id="9615.ENSCAFP00000036484"/>
<dbReference type="PaxDb" id="9612-ENSCAFP00000015389"/>
<dbReference type="eggNOG" id="KOG0781">
    <property type="taxonomic scope" value="Eukaryota"/>
</dbReference>
<dbReference type="InParanoid" id="P06625"/>
<dbReference type="OrthoDB" id="1727884at2759"/>
<dbReference type="BRENDA" id="3.6.5.4">
    <property type="organism ID" value="1153"/>
</dbReference>
<dbReference type="Proteomes" id="UP000002254">
    <property type="component" value="Unplaced"/>
</dbReference>
<dbReference type="Proteomes" id="UP000694429">
    <property type="component" value="Unplaced"/>
</dbReference>
<dbReference type="Proteomes" id="UP000694542">
    <property type="component" value="Unplaced"/>
</dbReference>
<dbReference type="Proteomes" id="UP000805418">
    <property type="component" value="Unplaced"/>
</dbReference>
<dbReference type="GO" id="GO:0005789">
    <property type="term" value="C:endoplasmic reticulum membrane"/>
    <property type="evidence" value="ECO:0000318"/>
    <property type="project" value="GO_Central"/>
</dbReference>
<dbReference type="GO" id="GO:0005785">
    <property type="term" value="C:signal recognition particle receptor complex"/>
    <property type="evidence" value="ECO:0007669"/>
    <property type="project" value="InterPro"/>
</dbReference>
<dbReference type="GO" id="GO:0016887">
    <property type="term" value="F:ATP hydrolysis activity"/>
    <property type="evidence" value="ECO:0007669"/>
    <property type="project" value="InterPro"/>
</dbReference>
<dbReference type="GO" id="GO:0005525">
    <property type="term" value="F:GTP binding"/>
    <property type="evidence" value="ECO:0007669"/>
    <property type="project" value="UniProtKB-KW"/>
</dbReference>
<dbReference type="GO" id="GO:0003924">
    <property type="term" value="F:GTPase activity"/>
    <property type="evidence" value="ECO:0000318"/>
    <property type="project" value="GO_Central"/>
</dbReference>
<dbReference type="GO" id="GO:0005047">
    <property type="term" value="F:signal recognition particle binding"/>
    <property type="evidence" value="ECO:0000318"/>
    <property type="project" value="GO_Central"/>
</dbReference>
<dbReference type="GO" id="GO:0006886">
    <property type="term" value="P:intracellular protein transport"/>
    <property type="evidence" value="ECO:0007669"/>
    <property type="project" value="InterPro"/>
</dbReference>
<dbReference type="GO" id="GO:0045047">
    <property type="term" value="P:protein targeting to ER"/>
    <property type="evidence" value="ECO:0000318"/>
    <property type="project" value="GO_Central"/>
</dbReference>
<dbReference type="GO" id="GO:0006614">
    <property type="term" value="P:SRP-dependent cotranslational protein targeting to membrane"/>
    <property type="evidence" value="ECO:0007669"/>
    <property type="project" value="InterPro"/>
</dbReference>
<dbReference type="CDD" id="cd14826">
    <property type="entry name" value="SR_alpha_SRX"/>
    <property type="match status" value="1"/>
</dbReference>
<dbReference type="CDD" id="cd17876">
    <property type="entry name" value="SRalpha_C"/>
    <property type="match status" value="1"/>
</dbReference>
<dbReference type="FunFam" id="3.40.50.300:FF:000188">
    <property type="entry name" value="signal recognition particle receptor subunit alpha"/>
    <property type="match status" value="1"/>
</dbReference>
<dbReference type="FunFam" id="1.20.120.140:FF:000010">
    <property type="entry name" value="signal recognition particle receptor subunit alpha isoform X2"/>
    <property type="match status" value="1"/>
</dbReference>
<dbReference type="FunFam" id="3.30.450.60:FF:000021">
    <property type="entry name" value="signal recognition particle receptor subunit alpha isoform X2"/>
    <property type="match status" value="1"/>
</dbReference>
<dbReference type="Gene3D" id="3.30.450.60">
    <property type="match status" value="1"/>
</dbReference>
<dbReference type="Gene3D" id="3.40.50.300">
    <property type="entry name" value="P-loop containing nucleotide triphosphate hydrolases"/>
    <property type="match status" value="1"/>
</dbReference>
<dbReference type="Gene3D" id="1.20.120.140">
    <property type="entry name" value="Signal recognition particle SRP54, nucleotide-binding domain"/>
    <property type="match status" value="1"/>
</dbReference>
<dbReference type="InterPro" id="IPR003593">
    <property type="entry name" value="AAA+_ATPase"/>
</dbReference>
<dbReference type="InterPro" id="IPR011012">
    <property type="entry name" value="Longin-like_dom_sf"/>
</dbReference>
<dbReference type="InterPro" id="IPR027417">
    <property type="entry name" value="P-loop_NTPase"/>
</dbReference>
<dbReference type="InterPro" id="IPR007222">
    <property type="entry name" value="Sig_recog_particle_rcpt_asu_N"/>
</dbReference>
<dbReference type="InterPro" id="IPR013822">
    <property type="entry name" value="Signal_recog_particl_SRP54_hlx"/>
</dbReference>
<dbReference type="InterPro" id="IPR036225">
    <property type="entry name" value="SRP/SRP_N"/>
</dbReference>
<dbReference type="InterPro" id="IPR000897">
    <property type="entry name" value="SRP54_GTPase_dom"/>
</dbReference>
<dbReference type="InterPro" id="IPR042101">
    <property type="entry name" value="SRP54_N_sf"/>
</dbReference>
<dbReference type="PANTHER" id="PTHR43134">
    <property type="entry name" value="SIGNAL RECOGNITION PARTICLE RECEPTOR SUBUNIT ALPHA"/>
    <property type="match status" value="1"/>
</dbReference>
<dbReference type="PANTHER" id="PTHR43134:SF1">
    <property type="entry name" value="SIGNAL RECOGNITION PARTICLE RECEPTOR SUBUNIT ALPHA"/>
    <property type="match status" value="1"/>
</dbReference>
<dbReference type="Pfam" id="PF04086">
    <property type="entry name" value="SRP-alpha_N"/>
    <property type="match status" value="1"/>
</dbReference>
<dbReference type="Pfam" id="PF00448">
    <property type="entry name" value="SRP54"/>
    <property type="match status" value="1"/>
</dbReference>
<dbReference type="Pfam" id="PF02881">
    <property type="entry name" value="SRP54_N"/>
    <property type="match status" value="1"/>
</dbReference>
<dbReference type="SMART" id="SM00382">
    <property type="entry name" value="AAA"/>
    <property type="match status" value="1"/>
</dbReference>
<dbReference type="SMART" id="SM00962">
    <property type="entry name" value="SRP54"/>
    <property type="match status" value="1"/>
</dbReference>
<dbReference type="SMART" id="SM00963">
    <property type="entry name" value="SRP54_N"/>
    <property type="match status" value="1"/>
</dbReference>
<dbReference type="SUPFAM" id="SSF47364">
    <property type="entry name" value="Domain of the SRP/SRP receptor G-proteins"/>
    <property type="match status" value="1"/>
</dbReference>
<dbReference type="SUPFAM" id="SSF52540">
    <property type="entry name" value="P-loop containing nucleoside triphosphate hydrolases"/>
    <property type="match status" value="1"/>
</dbReference>
<dbReference type="SUPFAM" id="SSF64356">
    <property type="entry name" value="SNARE-like"/>
    <property type="match status" value="1"/>
</dbReference>
<dbReference type="PROSITE" id="PS00300">
    <property type="entry name" value="SRP54"/>
    <property type="match status" value="1"/>
</dbReference>